<proteinExistence type="inferred from homology"/>
<sequence>MAIQHPDIQPAVNHSVQVAIAGAGPVGLMMANYLGQMGIDVLVVEKLDKLIDYPRAIGIDDEALRTMQSVGLVDNVLPHTTPWHAMRFLTPKGRCFADIQPMTDEFGWPRRNAFIQPQVDAVMLEGVSRFPNVRCLFSRELEAFSQQDDEVTLHLKTAEGLREIVKAQWLVACDGGASFVRRTLNVPFEGKTAPNQWIVVDIANDPLSTPHIYLCCDPVRPYVSAALPHAVRRFEFMVMPGETEEQLREPQNMRKLLSKVLPNPDNVELIRQRVYTHNARLAQRFRIDRVLLAGDAAHIMPVWQGQGYNSGMRDAFNLAWKLALVIQGKARDALLDTYQQERRDHAKAMIDLSVTAGNVLAPPKRWQGTLRDGVSWLLNYLPPVKRYFLEMRFKPMPQYYGGALVREGEAKHSPVGKMFIQPKVTLENGDVTLLDNAIGANFAVIGWGCNPLWGMSDEQIQQWRALSTRFIQVVPEVQIHTAQDNHDGVLRVGDTQGRLRSWFAQHNASLVVMRPDRFVAATAIPQTLGKTLNKLASVMTLTRPDADVSVEKVA</sequence>
<protein>
    <recommendedName>
        <fullName evidence="1">3-(3-hydroxy-phenyl)propionate/3-hydroxycinnamic acid hydroxylase</fullName>
        <shortName evidence="1">3-HCI hydroxylase</shortName>
        <shortName evidence="1">3-HPP hydroxylase</shortName>
        <ecNumber evidence="1">1.14.13.127</ecNumber>
    </recommendedName>
</protein>
<keyword id="KW-0058">Aromatic hydrocarbons catabolism</keyword>
<keyword id="KW-0274">FAD</keyword>
<keyword id="KW-0285">Flavoprotein</keyword>
<keyword id="KW-0520">NAD</keyword>
<keyword id="KW-0560">Oxidoreductase</keyword>
<keyword id="KW-1185">Reference proteome</keyword>
<name>MHPA_ECO57</name>
<dbReference type="EC" id="1.14.13.127" evidence="1"/>
<dbReference type="EMBL" id="AE005174">
    <property type="protein sequence ID" value="AAG54698.1"/>
    <property type="molecule type" value="Genomic_DNA"/>
</dbReference>
<dbReference type="EMBL" id="BA000007">
    <property type="protein sequence ID" value="BAB33825.1"/>
    <property type="molecule type" value="Genomic_DNA"/>
</dbReference>
<dbReference type="PIR" id="B90679">
    <property type="entry name" value="B90679"/>
</dbReference>
<dbReference type="PIR" id="F85529">
    <property type="entry name" value="F85529"/>
</dbReference>
<dbReference type="RefSeq" id="NP_308429.1">
    <property type="nucleotide sequence ID" value="NC_002695.1"/>
</dbReference>
<dbReference type="RefSeq" id="WP_001007426.1">
    <property type="nucleotide sequence ID" value="NZ_VOAI01000005.1"/>
</dbReference>
<dbReference type="SMR" id="Q8X680"/>
<dbReference type="STRING" id="155864.Z0445"/>
<dbReference type="GeneID" id="914504"/>
<dbReference type="KEGG" id="ece:Z0445"/>
<dbReference type="KEGG" id="ecs:ECs_0402"/>
<dbReference type="PATRIC" id="fig|386585.9.peg.497"/>
<dbReference type="eggNOG" id="COG0654">
    <property type="taxonomic scope" value="Bacteria"/>
</dbReference>
<dbReference type="HOGENOM" id="CLU_009665_20_2_6"/>
<dbReference type="OMA" id="DFIAPHS"/>
<dbReference type="UniPathway" id="UPA00714"/>
<dbReference type="Proteomes" id="UP000000558">
    <property type="component" value="Chromosome"/>
</dbReference>
<dbReference type="Proteomes" id="UP000002519">
    <property type="component" value="Chromosome"/>
</dbReference>
<dbReference type="GO" id="GO:0008688">
    <property type="term" value="F:3-(3-hydroxyphenyl)propionate hydroxylase activity"/>
    <property type="evidence" value="ECO:0007669"/>
    <property type="project" value="UniProtKB-UniRule"/>
</dbReference>
<dbReference type="GO" id="GO:0071949">
    <property type="term" value="F:FAD binding"/>
    <property type="evidence" value="ECO:0007669"/>
    <property type="project" value="InterPro"/>
</dbReference>
<dbReference type="GO" id="GO:0019622">
    <property type="term" value="P:3-(3-hydroxy)phenylpropionate catabolic process"/>
    <property type="evidence" value="ECO:0007669"/>
    <property type="project" value="UniProtKB-UniRule"/>
</dbReference>
<dbReference type="GO" id="GO:0019380">
    <property type="term" value="P:3-phenylpropionate catabolic process"/>
    <property type="evidence" value="ECO:0007669"/>
    <property type="project" value="UniProtKB-UniPathway"/>
</dbReference>
<dbReference type="FunFam" id="3.30.70.2450:FF:000001">
    <property type="entry name" value="3-(3-hydroxy-phenyl)propionate/3-hydroxycinnamic acid hydroxylase"/>
    <property type="match status" value="1"/>
</dbReference>
<dbReference type="FunFam" id="3.50.50.60:FF:000126">
    <property type="entry name" value="3-(3-hydroxy-phenyl)propionate/3-hydroxycinnamic acid hydroxylase"/>
    <property type="match status" value="1"/>
</dbReference>
<dbReference type="Gene3D" id="3.30.70.2450">
    <property type="match status" value="1"/>
</dbReference>
<dbReference type="Gene3D" id="3.50.50.60">
    <property type="entry name" value="FAD/NAD(P)-binding domain"/>
    <property type="match status" value="1"/>
</dbReference>
<dbReference type="HAMAP" id="MF_01652">
    <property type="entry name" value="MhpA"/>
    <property type="match status" value="1"/>
</dbReference>
<dbReference type="InterPro" id="IPR023786">
    <property type="entry name" value="3-HPP/3HCI_hydroxylase"/>
</dbReference>
<dbReference type="InterPro" id="IPR002938">
    <property type="entry name" value="FAD-bd"/>
</dbReference>
<dbReference type="InterPro" id="IPR036188">
    <property type="entry name" value="FAD/NAD-bd_sf"/>
</dbReference>
<dbReference type="InterPro" id="IPR050631">
    <property type="entry name" value="PheA/TfdB_FAD_monoxygenase"/>
</dbReference>
<dbReference type="NCBIfam" id="NF004827">
    <property type="entry name" value="PRK06183.1-1"/>
    <property type="match status" value="1"/>
</dbReference>
<dbReference type="NCBIfam" id="NF004829">
    <property type="entry name" value="PRK06183.1-3"/>
    <property type="match status" value="1"/>
</dbReference>
<dbReference type="NCBIfam" id="NF004831">
    <property type="entry name" value="PRK06183.1-5"/>
    <property type="match status" value="1"/>
</dbReference>
<dbReference type="PANTHER" id="PTHR43476">
    <property type="entry name" value="3-(3-HYDROXY-PHENYL)PROPIONATE/3-HYDROXYCINNAMIC ACID HYDROXYLASE"/>
    <property type="match status" value="1"/>
</dbReference>
<dbReference type="PANTHER" id="PTHR43476:SF3">
    <property type="entry name" value="FAD-BINDING MONOOXYGENASE"/>
    <property type="match status" value="1"/>
</dbReference>
<dbReference type="Pfam" id="PF01494">
    <property type="entry name" value="FAD_binding_3"/>
    <property type="match status" value="1"/>
</dbReference>
<dbReference type="PRINTS" id="PR00420">
    <property type="entry name" value="RNGMNOXGNASE"/>
</dbReference>
<dbReference type="SUPFAM" id="SSF51905">
    <property type="entry name" value="FAD/NAD(P)-binding domain"/>
    <property type="match status" value="1"/>
</dbReference>
<organism>
    <name type="scientific">Escherichia coli O157:H7</name>
    <dbReference type="NCBI Taxonomy" id="83334"/>
    <lineage>
        <taxon>Bacteria</taxon>
        <taxon>Pseudomonadati</taxon>
        <taxon>Pseudomonadota</taxon>
        <taxon>Gammaproteobacteria</taxon>
        <taxon>Enterobacterales</taxon>
        <taxon>Enterobacteriaceae</taxon>
        <taxon>Escherichia</taxon>
    </lineage>
</organism>
<accession>Q8X680</accession>
<accession>Q7AH53</accession>
<comment type="function">
    <text evidence="1">Catalyzes the insertion of one atom of molecular oxygen into position 2 of the phenyl ring of 3-(3-hydroxyphenyl)propionate (3-HPP) and hydroxycinnamic acid (3HCI).</text>
</comment>
<comment type="catalytic activity">
    <reaction evidence="1">
        <text>3-(3-hydroxyphenyl)propanoate + NADH + O2 + H(+) = 3-(2,3-dihydroxyphenyl)propanoate + NAD(+) + H2O</text>
        <dbReference type="Rhea" id="RHEA:24785"/>
        <dbReference type="ChEBI" id="CHEBI:15377"/>
        <dbReference type="ChEBI" id="CHEBI:15378"/>
        <dbReference type="ChEBI" id="CHEBI:15379"/>
        <dbReference type="ChEBI" id="CHEBI:46951"/>
        <dbReference type="ChEBI" id="CHEBI:57277"/>
        <dbReference type="ChEBI" id="CHEBI:57540"/>
        <dbReference type="ChEBI" id="CHEBI:57945"/>
        <dbReference type="EC" id="1.14.13.127"/>
    </reaction>
</comment>
<comment type="catalytic activity">
    <reaction evidence="1">
        <text>(2E)-3-(3-hydroxyphenyl)prop-2-enoate + NADH + O2 + H(+) = (2E)-3-(2,3-dihydroxyphenyl)prop-2-enoate + NAD(+) + H2O</text>
        <dbReference type="Rhea" id="RHEA:27846"/>
        <dbReference type="ChEBI" id="CHEBI:15377"/>
        <dbReference type="ChEBI" id="CHEBI:15378"/>
        <dbReference type="ChEBI" id="CHEBI:15379"/>
        <dbReference type="ChEBI" id="CHEBI:47928"/>
        <dbReference type="ChEBI" id="CHEBI:57540"/>
        <dbReference type="ChEBI" id="CHEBI:57945"/>
        <dbReference type="ChEBI" id="CHEBI:58642"/>
        <dbReference type="EC" id="1.14.13.127"/>
    </reaction>
</comment>
<comment type="cofactor">
    <cofactor evidence="1">
        <name>FAD</name>
        <dbReference type="ChEBI" id="CHEBI:57692"/>
    </cofactor>
</comment>
<comment type="pathway">
    <text evidence="1">Aromatic compound metabolism; 3-phenylpropanoate degradation.</text>
</comment>
<comment type="similarity">
    <text evidence="1">Belongs to the PheA/TfdB FAD monooxygenase family.</text>
</comment>
<feature type="chain" id="PRO_0000337631" description="3-(3-hydroxy-phenyl)propionate/3-hydroxycinnamic acid hydroxylase">
    <location>
        <begin position="1"/>
        <end position="554"/>
    </location>
</feature>
<feature type="binding site" evidence="1">
    <location>
        <begin position="17"/>
        <end position="46"/>
    </location>
    <ligand>
        <name>FAD</name>
        <dbReference type="ChEBI" id="CHEBI:57692"/>
    </ligand>
</feature>
<feature type="binding site" evidence="1">
    <location>
        <begin position="285"/>
        <end position="295"/>
    </location>
    <ligand>
        <name>FAD</name>
        <dbReference type="ChEBI" id="CHEBI:57692"/>
    </ligand>
</feature>
<gene>
    <name evidence="1" type="primary">mhpA</name>
    <name type="ordered locus">Z0445</name>
    <name type="ordered locus">ECs0402</name>
</gene>
<reference key="1">
    <citation type="journal article" date="2001" name="Nature">
        <title>Genome sequence of enterohaemorrhagic Escherichia coli O157:H7.</title>
        <authorList>
            <person name="Perna N.T."/>
            <person name="Plunkett G. III"/>
            <person name="Burland V."/>
            <person name="Mau B."/>
            <person name="Glasner J.D."/>
            <person name="Rose D.J."/>
            <person name="Mayhew G.F."/>
            <person name="Evans P.S."/>
            <person name="Gregor J."/>
            <person name="Kirkpatrick H.A."/>
            <person name="Posfai G."/>
            <person name="Hackett J."/>
            <person name="Klink S."/>
            <person name="Boutin A."/>
            <person name="Shao Y."/>
            <person name="Miller L."/>
            <person name="Grotbeck E.J."/>
            <person name="Davis N.W."/>
            <person name="Lim A."/>
            <person name="Dimalanta E.T."/>
            <person name="Potamousis K."/>
            <person name="Apodaca J."/>
            <person name="Anantharaman T.S."/>
            <person name="Lin J."/>
            <person name="Yen G."/>
            <person name="Schwartz D.C."/>
            <person name="Welch R.A."/>
            <person name="Blattner F.R."/>
        </authorList>
    </citation>
    <scope>NUCLEOTIDE SEQUENCE [LARGE SCALE GENOMIC DNA]</scope>
    <source>
        <strain>O157:H7 / EDL933 / ATCC 700927 / EHEC</strain>
    </source>
</reference>
<reference key="2">
    <citation type="journal article" date="2001" name="DNA Res.">
        <title>Complete genome sequence of enterohemorrhagic Escherichia coli O157:H7 and genomic comparison with a laboratory strain K-12.</title>
        <authorList>
            <person name="Hayashi T."/>
            <person name="Makino K."/>
            <person name="Ohnishi M."/>
            <person name="Kurokawa K."/>
            <person name="Ishii K."/>
            <person name="Yokoyama K."/>
            <person name="Han C.-G."/>
            <person name="Ohtsubo E."/>
            <person name="Nakayama K."/>
            <person name="Murata T."/>
            <person name="Tanaka M."/>
            <person name="Tobe T."/>
            <person name="Iida T."/>
            <person name="Takami H."/>
            <person name="Honda T."/>
            <person name="Sasakawa C."/>
            <person name="Ogasawara N."/>
            <person name="Yasunaga T."/>
            <person name="Kuhara S."/>
            <person name="Shiba T."/>
            <person name="Hattori M."/>
            <person name="Shinagawa H."/>
        </authorList>
    </citation>
    <scope>NUCLEOTIDE SEQUENCE [LARGE SCALE GENOMIC DNA]</scope>
    <source>
        <strain>O157:H7 / Sakai / RIMD 0509952 / EHEC</strain>
    </source>
</reference>
<evidence type="ECO:0000255" key="1">
    <source>
        <dbReference type="HAMAP-Rule" id="MF_01652"/>
    </source>
</evidence>